<gene>
    <name type="primary">PLXDC2</name>
    <name type="synonym">TEM7R</name>
    <name type="ORF">UNQ2514/PRO6003</name>
</gene>
<reference key="1">
    <citation type="journal article" date="2001" name="Cancer Res.">
        <title>Cell surface tumor endothelial markers are conserved in mice and humans.</title>
        <authorList>
            <person name="Carson-Walter E.B."/>
            <person name="Watkins D.N."/>
            <person name="Nanda A."/>
            <person name="Vogelstein B."/>
            <person name="Kinzler K.W."/>
            <person name="St Croix B."/>
        </authorList>
    </citation>
    <scope>NUCLEOTIDE SEQUENCE [MRNA] (ISOFORM 1)</scope>
    <scope>FUNCTION</scope>
    <scope>TISSUE SPECIFICITY</scope>
    <scope>VARIANTS ILE-396 AND VAL-458</scope>
</reference>
<reference key="2">
    <citation type="journal article" date="2003" name="Genome Res.">
        <title>The secreted protein discovery initiative (SPDI), a large-scale effort to identify novel human secreted and transmembrane proteins: a bioinformatics assessment.</title>
        <authorList>
            <person name="Clark H.F."/>
            <person name="Gurney A.L."/>
            <person name="Abaya E."/>
            <person name="Baker K."/>
            <person name="Baldwin D.T."/>
            <person name="Brush J."/>
            <person name="Chen J."/>
            <person name="Chow B."/>
            <person name="Chui C."/>
            <person name="Crowley C."/>
            <person name="Currell B."/>
            <person name="Deuel B."/>
            <person name="Dowd P."/>
            <person name="Eaton D."/>
            <person name="Foster J.S."/>
            <person name="Grimaldi C."/>
            <person name="Gu Q."/>
            <person name="Hass P.E."/>
            <person name="Heldens S."/>
            <person name="Huang A."/>
            <person name="Kim H.S."/>
            <person name="Klimowski L."/>
            <person name="Jin Y."/>
            <person name="Johnson S."/>
            <person name="Lee J."/>
            <person name="Lewis L."/>
            <person name="Liao D."/>
            <person name="Mark M.R."/>
            <person name="Robbie E."/>
            <person name="Sanchez C."/>
            <person name="Schoenfeld J."/>
            <person name="Seshagiri S."/>
            <person name="Simmons L."/>
            <person name="Singh J."/>
            <person name="Smith V."/>
            <person name="Stinson J."/>
            <person name="Vagts A."/>
            <person name="Vandlen R.L."/>
            <person name="Watanabe C."/>
            <person name="Wieand D."/>
            <person name="Woods K."/>
            <person name="Xie M.-H."/>
            <person name="Yansura D.G."/>
            <person name="Yi S."/>
            <person name="Yu G."/>
            <person name="Yuan J."/>
            <person name="Zhang M."/>
            <person name="Zhang Z."/>
            <person name="Goddard A.D."/>
            <person name="Wood W.I."/>
            <person name="Godowski P.J."/>
            <person name="Gray A.M."/>
        </authorList>
    </citation>
    <scope>NUCLEOTIDE SEQUENCE [LARGE SCALE MRNA] (ISOFORM 1)</scope>
</reference>
<reference key="3">
    <citation type="journal article" date="2004" name="Nat. Genet.">
        <title>Complete sequencing and characterization of 21,243 full-length human cDNAs.</title>
        <authorList>
            <person name="Ota T."/>
            <person name="Suzuki Y."/>
            <person name="Nishikawa T."/>
            <person name="Otsuki T."/>
            <person name="Sugiyama T."/>
            <person name="Irie R."/>
            <person name="Wakamatsu A."/>
            <person name="Hayashi K."/>
            <person name="Sato H."/>
            <person name="Nagai K."/>
            <person name="Kimura K."/>
            <person name="Makita H."/>
            <person name="Sekine M."/>
            <person name="Obayashi M."/>
            <person name="Nishi T."/>
            <person name="Shibahara T."/>
            <person name="Tanaka T."/>
            <person name="Ishii S."/>
            <person name="Yamamoto J."/>
            <person name="Saito K."/>
            <person name="Kawai Y."/>
            <person name="Isono Y."/>
            <person name="Nakamura Y."/>
            <person name="Nagahari K."/>
            <person name="Murakami K."/>
            <person name="Yasuda T."/>
            <person name="Iwayanagi T."/>
            <person name="Wagatsuma M."/>
            <person name="Shiratori A."/>
            <person name="Sudo H."/>
            <person name="Hosoiri T."/>
            <person name="Kaku Y."/>
            <person name="Kodaira H."/>
            <person name="Kondo H."/>
            <person name="Sugawara M."/>
            <person name="Takahashi M."/>
            <person name="Kanda K."/>
            <person name="Yokoi T."/>
            <person name="Furuya T."/>
            <person name="Kikkawa E."/>
            <person name="Omura Y."/>
            <person name="Abe K."/>
            <person name="Kamihara K."/>
            <person name="Katsuta N."/>
            <person name="Sato K."/>
            <person name="Tanikawa M."/>
            <person name="Yamazaki M."/>
            <person name="Ninomiya K."/>
            <person name="Ishibashi T."/>
            <person name="Yamashita H."/>
            <person name="Murakawa K."/>
            <person name="Fujimori K."/>
            <person name="Tanai H."/>
            <person name="Kimata M."/>
            <person name="Watanabe M."/>
            <person name="Hiraoka S."/>
            <person name="Chiba Y."/>
            <person name="Ishida S."/>
            <person name="Ono Y."/>
            <person name="Takiguchi S."/>
            <person name="Watanabe S."/>
            <person name="Yosida M."/>
            <person name="Hotuta T."/>
            <person name="Kusano J."/>
            <person name="Kanehori K."/>
            <person name="Takahashi-Fujii A."/>
            <person name="Hara H."/>
            <person name="Tanase T.-O."/>
            <person name="Nomura Y."/>
            <person name="Togiya S."/>
            <person name="Komai F."/>
            <person name="Hara R."/>
            <person name="Takeuchi K."/>
            <person name="Arita M."/>
            <person name="Imose N."/>
            <person name="Musashino K."/>
            <person name="Yuuki H."/>
            <person name="Oshima A."/>
            <person name="Sasaki N."/>
            <person name="Aotsuka S."/>
            <person name="Yoshikawa Y."/>
            <person name="Matsunawa H."/>
            <person name="Ichihara T."/>
            <person name="Shiohata N."/>
            <person name="Sano S."/>
            <person name="Moriya S."/>
            <person name="Momiyama H."/>
            <person name="Satoh N."/>
            <person name="Takami S."/>
            <person name="Terashima Y."/>
            <person name="Suzuki O."/>
            <person name="Nakagawa S."/>
            <person name="Senoh A."/>
            <person name="Mizoguchi H."/>
            <person name="Goto Y."/>
            <person name="Shimizu F."/>
            <person name="Wakebe H."/>
            <person name="Hishigaki H."/>
            <person name="Watanabe T."/>
            <person name="Sugiyama A."/>
            <person name="Takemoto M."/>
            <person name="Kawakami B."/>
            <person name="Yamazaki M."/>
            <person name="Watanabe K."/>
            <person name="Kumagai A."/>
            <person name="Itakura S."/>
            <person name="Fukuzumi Y."/>
            <person name="Fujimori Y."/>
            <person name="Komiyama M."/>
            <person name="Tashiro H."/>
            <person name="Tanigami A."/>
            <person name="Fujiwara T."/>
            <person name="Ono T."/>
            <person name="Yamada K."/>
            <person name="Fujii Y."/>
            <person name="Ozaki K."/>
            <person name="Hirao M."/>
            <person name="Ohmori Y."/>
            <person name="Kawabata A."/>
            <person name="Hikiji T."/>
            <person name="Kobatake N."/>
            <person name="Inagaki H."/>
            <person name="Ikema Y."/>
            <person name="Okamoto S."/>
            <person name="Okitani R."/>
            <person name="Kawakami T."/>
            <person name="Noguchi S."/>
            <person name="Itoh T."/>
            <person name="Shigeta K."/>
            <person name="Senba T."/>
            <person name="Matsumura K."/>
            <person name="Nakajima Y."/>
            <person name="Mizuno T."/>
            <person name="Morinaga M."/>
            <person name="Sasaki M."/>
            <person name="Togashi T."/>
            <person name="Oyama M."/>
            <person name="Hata H."/>
            <person name="Watanabe M."/>
            <person name="Komatsu T."/>
            <person name="Mizushima-Sugano J."/>
            <person name="Satoh T."/>
            <person name="Shirai Y."/>
            <person name="Takahashi Y."/>
            <person name="Nakagawa K."/>
            <person name="Okumura K."/>
            <person name="Nagase T."/>
            <person name="Nomura N."/>
            <person name="Kikuchi H."/>
            <person name="Masuho Y."/>
            <person name="Yamashita R."/>
            <person name="Nakai K."/>
            <person name="Yada T."/>
            <person name="Nakamura Y."/>
            <person name="Ohara O."/>
            <person name="Isogai T."/>
            <person name="Sugano S."/>
        </authorList>
    </citation>
    <scope>NUCLEOTIDE SEQUENCE [LARGE SCALE MRNA] (ISOFORM 3)</scope>
    <scope>VARIANTS ILE-396 AND VAL-458</scope>
</reference>
<reference key="4">
    <citation type="journal article" date="2004" name="Nature">
        <title>The DNA sequence and comparative analysis of human chromosome 10.</title>
        <authorList>
            <person name="Deloukas P."/>
            <person name="Earthrowl M.E."/>
            <person name="Grafham D.V."/>
            <person name="Rubenfield M."/>
            <person name="French L."/>
            <person name="Steward C.A."/>
            <person name="Sims S.K."/>
            <person name="Jones M.C."/>
            <person name="Searle S."/>
            <person name="Scott C."/>
            <person name="Howe K."/>
            <person name="Hunt S.E."/>
            <person name="Andrews T.D."/>
            <person name="Gilbert J.G.R."/>
            <person name="Swarbreck D."/>
            <person name="Ashurst J.L."/>
            <person name="Taylor A."/>
            <person name="Battles J."/>
            <person name="Bird C.P."/>
            <person name="Ainscough R."/>
            <person name="Almeida J.P."/>
            <person name="Ashwell R.I.S."/>
            <person name="Ambrose K.D."/>
            <person name="Babbage A.K."/>
            <person name="Bagguley C.L."/>
            <person name="Bailey J."/>
            <person name="Banerjee R."/>
            <person name="Bates K."/>
            <person name="Beasley H."/>
            <person name="Bray-Allen S."/>
            <person name="Brown A.J."/>
            <person name="Brown J.Y."/>
            <person name="Burford D.C."/>
            <person name="Burrill W."/>
            <person name="Burton J."/>
            <person name="Cahill P."/>
            <person name="Camire D."/>
            <person name="Carter N.P."/>
            <person name="Chapman J.C."/>
            <person name="Clark S.Y."/>
            <person name="Clarke G."/>
            <person name="Clee C.M."/>
            <person name="Clegg S."/>
            <person name="Corby N."/>
            <person name="Coulson A."/>
            <person name="Dhami P."/>
            <person name="Dutta I."/>
            <person name="Dunn M."/>
            <person name="Faulkner L."/>
            <person name="Frankish A."/>
            <person name="Frankland J.A."/>
            <person name="Garner P."/>
            <person name="Garnett J."/>
            <person name="Gribble S."/>
            <person name="Griffiths C."/>
            <person name="Grocock R."/>
            <person name="Gustafson E."/>
            <person name="Hammond S."/>
            <person name="Harley J.L."/>
            <person name="Hart E."/>
            <person name="Heath P.D."/>
            <person name="Ho T.P."/>
            <person name="Hopkins B."/>
            <person name="Horne J."/>
            <person name="Howden P.J."/>
            <person name="Huckle E."/>
            <person name="Hynds C."/>
            <person name="Johnson C."/>
            <person name="Johnson D."/>
            <person name="Kana A."/>
            <person name="Kay M."/>
            <person name="Kimberley A.M."/>
            <person name="Kershaw J.K."/>
            <person name="Kokkinaki M."/>
            <person name="Laird G.K."/>
            <person name="Lawlor S."/>
            <person name="Lee H.M."/>
            <person name="Leongamornlert D.A."/>
            <person name="Laird G."/>
            <person name="Lloyd C."/>
            <person name="Lloyd D.M."/>
            <person name="Loveland J."/>
            <person name="Lovell J."/>
            <person name="McLaren S."/>
            <person name="McLay K.E."/>
            <person name="McMurray A."/>
            <person name="Mashreghi-Mohammadi M."/>
            <person name="Matthews L."/>
            <person name="Milne S."/>
            <person name="Nickerson T."/>
            <person name="Nguyen M."/>
            <person name="Overton-Larty E."/>
            <person name="Palmer S.A."/>
            <person name="Pearce A.V."/>
            <person name="Peck A.I."/>
            <person name="Pelan S."/>
            <person name="Phillimore B."/>
            <person name="Porter K."/>
            <person name="Rice C.M."/>
            <person name="Rogosin A."/>
            <person name="Ross M.T."/>
            <person name="Sarafidou T."/>
            <person name="Sehra H.K."/>
            <person name="Shownkeen R."/>
            <person name="Skuce C.D."/>
            <person name="Smith M."/>
            <person name="Standring L."/>
            <person name="Sycamore N."/>
            <person name="Tester J."/>
            <person name="Thorpe A."/>
            <person name="Torcasso W."/>
            <person name="Tracey A."/>
            <person name="Tromans A."/>
            <person name="Tsolas J."/>
            <person name="Wall M."/>
            <person name="Walsh J."/>
            <person name="Wang H."/>
            <person name="Weinstock K."/>
            <person name="West A.P."/>
            <person name="Willey D.L."/>
            <person name="Whitehead S.L."/>
            <person name="Wilming L."/>
            <person name="Wray P.W."/>
            <person name="Young L."/>
            <person name="Chen Y."/>
            <person name="Lovering R.C."/>
            <person name="Moschonas N.K."/>
            <person name="Siebert R."/>
            <person name="Fechtel K."/>
            <person name="Bentley D."/>
            <person name="Durbin R.M."/>
            <person name="Hubbard T."/>
            <person name="Doucette-Stamm L."/>
            <person name="Beck S."/>
            <person name="Smith D.R."/>
            <person name="Rogers J."/>
        </authorList>
    </citation>
    <scope>NUCLEOTIDE SEQUENCE [LARGE SCALE GENOMIC DNA]</scope>
</reference>
<reference key="5">
    <citation type="journal article" date="2004" name="Genome Res.">
        <title>The status, quality, and expansion of the NIH full-length cDNA project: the Mammalian Gene Collection (MGC).</title>
        <authorList>
            <consortium name="The MGC Project Team"/>
        </authorList>
    </citation>
    <scope>NUCLEOTIDE SEQUENCE [LARGE SCALE MRNA] (ISOFORM 2)</scope>
    <source>
        <tissue>Ovary</tissue>
    </source>
</reference>
<reference key="6">
    <citation type="journal article" date="2005" name="J. Proteome Res.">
        <title>Human plasma N-glycoproteome analysis by immunoaffinity subtraction, hydrazide chemistry, and mass spectrometry.</title>
        <authorList>
            <person name="Liu T."/>
            <person name="Qian W.-J."/>
            <person name="Gritsenko M.A."/>
            <person name="Camp D.G. II"/>
            <person name="Monroe M.E."/>
            <person name="Moore R.J."/>
            <person name="Smith R.D."/>
        </authorList>
    </citation>
    <scope>GLYCOSYLATION [LARGE SCALE ANALYSIS] AT ASN-103</scope>
    <source>
        <tissue>Plasma</tissue>
    </source>
</reference>
<reference key="7">
    <citation type="journal article" date="2004" name="Cancer Res.">
        <title>Identification of a binding partner for the endothelial cell surface proteins TEM7 and TEM7R.</title>
        <authorList>
            <person name="Nanda A."/>
            <person name="Buckhaults P."/>
            <person name="Seaman S."/>
            <person name="Agrawal N."/>
            <person name="Boutin P."/>
            <person name="Shankara S."/>
            <person name="Nacht M."/>
            <person name="Teicher B."/>
            <person name="Stampfl J."/>
            <person name="Singh S."/>
            <person name="Vogelstein B."/>
            <person name="Kinzler K.W."/>
            <person name="St Croix B."/>
        </authorList>
    </citation>
    <scope>INTERACTION WITH CTTN</scope>
</reference>
<reference key="8">
    <citation type="journal article" date="2008" name="J. Proteome Res.">
        <title>Phosphorylation analysis of primary human T lymphocytes using sequential IMAC and titanium oxide enrichment.</title>
        <authorList>
            <person name="Carrascal M."/>
            <person name="Ovelleiro D."/>
            <person name="Casas V."/>
            <person name="Gay M."/>
            <person name="Abian J."/>
        </authorList>
    </citation>
    <scope>IDENTIFICATION BY MASS SPECTROMETRY [LARGE SCALE ANALYSIS]</scope>
    <source>
        <tissue>T-cell</tissue>
    </source>
</reference>
<reference key="9">
    <citation type="journal article" date="2009" name="J. Proteome Res.">
        <title>Glycoproteomics analysis of human liver tissue by combination of multiple enzyme digestion and hydrazide chemistry.</title>
        <authorList>
            <person name="Chen R."/>
            <person name="Jiang X."/>
            <person name="Sun D."/>
            <person name="Han G."/>
            <person name="Wang F."/>
            <person name="Ye M."/>
            <person name="Wang L."/>
            <person name="Zou H."/>
        </authorList>
    </citation>
    <scope>GLYCOSYLATION [LARGE SCALE ANALYSIS] AT ASN-160</scope>
    <source>
        <tissue>Liver</tissue>
    </source>
</reference>
<reference key="10">
    <citation type="journal article" date="2011" name="Sci. Signal.">
        <title>System-wide temporal characterization of the proteome and phosphoproteome of human embryonic stem cell differentiation.</title>
        <authorList>
            <person name="Rigbolt K.T."/>
            <person name="Prokhorova T.A."/>
            <person name="Akimov V."/>
            <person name="Henningsen J."/>
            <person name="Johansen P.T."/>
            <person name="Kratchmarova I."/>
            <person name="Kassem M."/>
            <person name="Mann M."/>
            <person name="Olsen J.V."/>
            <person name="Blagoev B."/>
        </authorList>
    </citation>
    <scope>PHOSPHORYLATION [LARGE SCALE ANALYSIS] AT SER-506</scope>
    <scope>IDENTIFICATION BY MASS SPECTROMETRY [LARGE SCALE ANALYSIS]</scope>
</reference>
<sequence length="529" mass="59583">MARFPKADLAAAGVMLLCHFFTDQFQFADGKPGDQILDWQYGVTQAFPHTEEEVEVDSHAYSHRWKRNLDFLKAVDTNRASVGQDSPEPRSFTDLLLDDGQDNNTQIEEDTDHNYYISRIYGPSDSASRDLWVNIDQMEKDKVKIHGILSNTHRQAARVNLSFDFPFYGHFLREITVATGGFIYTGEVVHRMLTATQYIAPLMANFDPSVSRNSTVRYFDNGTALVVQWDHVHLQDNYNLGSFTFQATLLMDGRIIFGYKEIPVLVTQISSTNHPVKVGLSDAFVVVHRIQQIPNVRRRTIYEYHRVELQMSKITNISAVEMTPLPTCLQFNRCGPCVSSQIGFNCSWCSKLQRCSSGFDRHRQDWVDSGCPEESKEKMCENTEPVETSSRTTTTVGATTTQFRVLTTTRRAVTSQFPTSLPTEDDTKIALHLKDNGASTDDSAAEKKGGTLHAGLIIGILILVLIVATAILVTVYMYHHPTSAASIFFIERRPSRWPAMKFRRGSGHPAYAEVEPVGEKEGFIVSEQC</sequence>
<name>PXDC2_HUMAN</name>
<feature type="signal peptide" evidence="1">
    <location>
        <begin position="1"/>
        <end position="30"/>
    </location>
</feature>
<feature type="chain" id="PRO_0000234574" description="Plexin domain-containing protein 2">
    <location>
        <begin position="31"/>
        <end position="529"/>
    </location>
</feature>
<feature type="topological domain" description="Extracellular" evidence="1">
    <location>
        <begin position="31"/>
        <end position="454"/>
    </location>
</feature>
<feature type="transmembrane region" description="Helical" evidence="1">
    <location>
        <begin position="455"/>
        <end position="475"/>
    </location>
</feature>
<feature type="topological domain" description="Cytoplasmic" evidence="1">
    <location>
        <begin position="476"/>
        <end position="529"/>
    </location>
</feature>
<feature type="domain" description="PSI">
    <location>
        <begin position="327"/>
        <end position="372"/>
    </location>
</feature>
<feature type="region of interest" description="Disordered" evidence="2">
    <location>
        <begin position="80"/>
        <end position="104"/>
    </location>
</feature>
<feature type="modified residue" description="Phosphoserine" evidence="11">
    <location>
        <position position="506"/>
    </location>
</feature>
<feature type="glycosylation site" description="N-linked (GlcNAc...) asparagine" evidence="6">
    <location>
        <position position="103"/>
    </location>
</feature>
<feature type="glycosylation site" description="N-linked (GlcNAc...) asparagine" evidence="7">
    <location>
        <position position="160"/>
    </location>
</feature>
<feature type="splice variant" id="VSP_018377" description="In isoform 3." evidence="8">
    <location>
        <begin position="1"/>
        <end position="378"/>
    </location>
</feature>
<feature type="splice variant" id="VSP_018378" description="In isoform 2." evidence="9">
    <location>
        <begin position="109"/>
        <end position="157"/>
    </location>
</feature>
<feature type="sequence variant" id="VAR_026292" description="In dbSNP:rs3817405." evidence="3 4">
    <original>V</original>
    <variation>I</variation>
    <location>
        <position position="396"/>
    </location>
</feature>
<feature type="sequence variant" id="VAR_026293" description="In dbSNP:rs2778979." evidence="3 4">
    <original>I</original>
    <variation>V</variation>
    <location>
        <position position="458"/>
    </location>
</feature>
<organism>
    <name type="scientific">Homo sapiens</name>
    <name type="common">Human</name>
    <dbReference type="NCBI Taxonomy" id="9606"/>
    <lineage>
        <taxon>Eukaryota</taxon>
        <taxon>Metazoa</taxon>
        <taxon>Chordata</taxon>
        <taxon>Craniata</taxon>
        <taxon>Vertebrata</taxon>
        <taxon>Euteleostomi</taxon>
        <taxon>Mammalia</taxon>
        <taxon>Eutheria</taxon>
        <taxon>Euarchontoglires</taxon>
        <taxon>Primates</taxon>
        <taxon>Haplorrhini</taxon>
        <taxon>Catarrhini</taxon>
        <taxon>Hominidae</taxon>
        <taxon>Homo</taxon>
    </lineage>
</organism>
<keyword id="KW-0025">Alternative splicing</keyword>
<keyword id="KW-0325">Glycoprotein</keyword>
<keyword id="KW-0472">Membrane</keyword>
<keyword id="KW-0597">Phosphoprotein</keyword>
<keyword id="KW-1267">Proteomics identification</keyword>
<keyword id="KW-1185">Reference proteome</keyword>
<keyword id="KW-0732">Signal</keyword>
<keyword id="KW-0812">Transmembrane</keyword>
<keyword id="KW-1133">Transmembrane helix</keyword>
<dbReference type="EMBL" id="AF378757">
    <property type="protein sequence ID" value="AAL11994.1"/>
    <property type="molecule type" value="mRNA"/>
</dbReference>
<dbReference type="EMBL" id="AY358486">
    <property type="protein sequence ID" value="AAQ88850.1"/>
    <property type="molecule type" value="mRNA"/>
</dbReference>
<dbReference type="EMBL" id="AK027529">
    <property type="protein sequence ID" value="BAB55178.1"/>
    <property type="molecule type" value="mRNA"/>
</dbReference>
<dbReference type="EMBL" id="AC067743">
    <property type="status" value="NOT_ANNOTATED_CDS"/>
    <property type="molecule type" value="Genomic_DNA"/>
</dbReference>
<dbReference type="EMBL" id="AC069549">
    <property type="status" value="NOT_ANNOTATED_CDS"/>
    <property type="molecule type" value="Genomic_DNA"/>
</dbReference>
<dbReference type="EMBL" id="AL353147">
    <property type="status" value="NOT_ANNOTATED_CDS"/>
    <property type="molecule type" value="Genomic_DNA"/>
</dbReference>
<dbReference type="EMBL" id="BC012885">
    <property type="protein sequence ID" value="AAH12885.1"/>
    <property type="molecule type" value="mRNA"/>
</dbReference>
<dbReference type="CCDS" id="CCDS60497.1">
    <molecule id="Q6UX71-2"/>
</dbReference>
<dbReference type="CCDS" id="CCDS7132.1">
    <molecule id="Q6UX71-1"/>
</dbReference>
<dbReference type="RefSeq" id="NP_001269665.1">
    <molecule id="Q6UX71-2"/>
    <property type="nucleotide sequence ID" value="NM_001282736.2"/>
</dbReference>
<dbReference type="RefSeq" id="NP_116201.7">
    <molecule id="Q6UX71-1"/>
    <property type="nucleotide sequence ID" value="NM_032812.8"/>
</dbReference>
<dbReference type="SMR" id="Q6UX71"/>
<dbReference type="BioGRID" id="124338">
    <property type="interactions" value="96"/>
</dbReference>
<dbReference type="DIP" id="DIP-46251N"/>
<dbReference type="FunCoup" id="Q6UX71">
    <property type="interactions" value="772"/>
</dbReference>
<dbReference type="IntAct" id="Q6UX71">
    <property type="interactions" value="53"/>
</dbReference>
<dbReference type="MINT" id="Q6UX71"/>
<dbReference type="STRING" id="9606.ENSP00000366460"/>
<dbReference type="GlyConnect" id="1616">
    <property type="glycosylation" value="5 N-Linked glycans (3 sites)"/>
</dbReference>
<dbReference type="GlyCosmos" id="Q6UX71">
    <property type="glycosylation" value="6 sites, 7 glycans"/>
</dbReference>
<dbReference type="GlyGen" id="Q6UX71">
    <property type="glycosylation" value="8 sites, 26 N-linked glycans (3 sites), 4 O-linked glycans (4 sites)"/>
</dbReference>
<dbReference type="iPTMnet" id="Q6UX71"/>
<dbReference type="PhosphoSitePlus" id="Q6UX71"/>
<dbReference type="BioMuta" id="PLXDC2"/>
<dbReference type="DMDM" id="74749416"/>
<dbReference type="jPOST" id="Q6UX71"/>
<dbReference type="MassIVE" id="Q6UX71"/>
<dbReference type="PaxDb" id="9606-ENSP00000366460"/>
<dbReference type="PeptideAtlas" id="Q6UX71"/>
<dbReference type="ProteomicsDB" id="67571">
    <molecule id="Q6UX71-1"/>
</dbReference>
<dbReference type="ProteomicsDB" id="67572">
    <molecule id="Q6UX71-2"/>
</dbReference>
<dbReference type="ProteomicsDB" id="67573">
    <molecule id="Q6UX71-3"/>
</dbReference>
<dbReference type="Pumba" id="Q6UX71"/>
<dbReference type="Antibodypedia" id="25453">
    <property type="antibodies" value="172 antibodies from 32 providers"/>
</dbReference>
<dbReference type="DNASU" id="84898"/>
<dbReference type="Ensembl" id="ENST00000377242.7">
    <molecule id="Q6UX71-2"/>
    <property type="protein sequence ID" value="ENSP00000366450.3"/>
    <property type="gene ID" value="ENSG00000120594.17"/>
</dbReference>
<dbReference type="Ensembl" id="ENST00000377252.5">
    <molecule id="Q6UX71-1"/>
    <property type="protein sequence ID" value="ENSP00000366460.3"/>
    <property type="gene ID" value="ENSG00000120594.17"/>
</dbReference>
<dbReference type="GeneID" id="84898"/>
<dbReference type="KEGG" id="hsa:84898"/>
<dbReference type="MANE-Select" id="ENST00000377252.5">
    <property type="protein sequence ID" value="ENSP00000366460.3"/>
    <property type="RefSeq nucleotide sequence ID" value="NM_032812.9"/>
    <property type="RefSeq protein sequence ID" value="NP_116201.7"/>
</dbReference>
<dbReference type="UCSC" id="uc001iqg.3">
    <molecule id="Q6UX71-1"/>
    <property type="organism name" value="human"/>
</dbReference>
<dbReference type="AGR" id="HGNC:21013"/>
<dbReference type="CTD" id="84898"/>
<dbReference type="DisGeNET" id="84898"/>
<dbReference type="GeneCards" id="PLXDC2"/>
<dbReference type="HGNC" id="HGNC:21013">
    <property type="gene designation" value="PLXDC2"/>
</dbReference>
<dbReference type="HPA" id="ENSG00000120594">
    <property type="expression patterns" value="Low tissue specificity"/>
</dbReference>
<dbReference type="MIM" id="606827">
    <property type="type" value="gene"/>
</dbReference>
<dbReference type="neXtProt" id="NX_Q6UX71"/>
<dbReference type="OpenTargets" id="ENSG00000120594"/>
<dbReference type="PharmGKB" id="PA134932187"/>
<dbReference type="VEuPathDB" id="HostDB:ENSG00000120594"/>
<dbReference type="eggNOG" id="KOG3848">
    <property type="taxonomic scope" value="Eukaryota"/>
</dbReference>
<dbReference type="GeneTree" id="ENSGT00440000033408"/>
<dbReference type="HOGENOM" id="CLU_029494_3_1_1"/>
<dbReference type="InParanoid" id="Q6UX71"/>
<dbReference type="OMA" id="LKAQPTC"/>
<dbReference type="OrthoDB" id="6285106at2759"/>
<dbReference type="PAN-GO" id="Q6UX71">
    <property type="GO annotations" value="0 GO annotations based on evolutionary models"/>
</dbReference>
<dbReference type="PhylomeDB" id="Q6UX71"/>
<dbReference type="TreeFam" id="TF314400"/>
<dbReference type="PathwayCommons" id="Q6UX71"/>
<dbReference type="SignaLink" id="Q6UX71"/>
<dbReference type="BioGRID-ORCS" id="84898">
    <property type="hits" value="10 hits in 1142 CRISPR screens"/>
</dbReference>
<dbReference type="ChiTaRS" id="PLXDC2">
    <property type="organism name" value="human"/>
</dbReference>
<dbReference type="GeneWiki" id="PLXDC2"/>
<dbReference type="GenomeRNAi" id="84898"/>
<dbReference type="Pharos" id="Q6UX71">
    <property type="development level" value="Tbio"/>
</dbReference>
<dbReference type="PRO" id="PR:Q6UX71"/>
<dbReference type="Proteomes" id="UP000005640">
    <property type="component" value="Chromosome 10"/>
</dbReference>
<dbReference type="RNAct" id="Q6UX71">
    <property type="molecule type" value="protein"/>
</dbReference>
<dbReference type="Bgee" id="ENSG00000120594">
    <property type="expression patterns" value="Expressed in calcaneal tendon and 199 other cell types or tissues"/>
</dbReference>
<dbReference type="GO" id="GO:0016020">
    <property type="term" value="C:membrane"/>
    <property type="evidence" value="ECO:0007669"/>
    <property type="project" value="UniProtKB-SubCell"/>
</dbReference>
<dbReference type="InterPro" id="IPR002165">
    <property type="entry name" value="Plexin_repeat"/>
</dbReference>
<dbReference type="InterPro" id="IPR031152">
    <property type="entry name" value="PLXDC"/>
</dbReference>
<dbReference type="InterPro" id="IPR016201">
    <property type="entry name" value="PSI"/>
</dbReference>
<dbReference type="PANTHER" id="PTHR13055:SF11">
    <property type="entry name" value="PLEXIN DOMAIN-CONTAINING PROTEIN 2"/>
    <property type="match status" value="1"/>
</dbReference>
<dbReference type="PANTHER" id="PTHR13055">
    <property type="entry name" value="TUMOR ENDOTHELIAL MARKER 7 RELATED"/>
    <property type="match status" value="1"/>
</dbReference>
<dbReference type="Pfam" id="PF01437">
    <property type="entry name" value="PSI"/>
    <property type="match status" value="1"/>
</dbReference>
<dbReference type="SMART" id="SM00423">
    <property type="entry name" value="PSI"/>
    <property type="match status" value="1"/>
</dbReference>
<accession>Q6UX71</accession>
<accession>Q96E59</accession>
<accession>Q96PD9</accession>
<accession>Q96SU9</accession>
<proteinExistence type="evidence at protein level"/>
<comment type="function">
    <text evidence="3">May play a role in tumor angiogenesis.</text>
</comment>
<comment type="subunit">
    <text evidence="5">Interacts with CTTN.</text>
</comment>
<comment type="interaction">
    <interactant intactId="EBI-6115410">
        <id>Q6UX71</id>
    </interactant>
    <interactant intactId="EBI-21734635">
        <id>P17516</id>
        <label>AKR1C4</label>
    </interactant>
    <organismsDiffer>false</organismsDiffer>
    <experiments>2</experiments>
</comment>
<comment type="interaction">
    <interactant intactId="EBI-6115410">
        <id>Q6UX71</id>
    </interactant>
    <interactant intactId="EBI-6115394">
        <id>A2APF7</id>
        <label>Zbp1</label>
    </interactant>
    <organismsDiffer>true</organismsDiffer>
    <experiments>2</experiments>
</comment>
<comment type="subcellular location">
    <subcellularLocation>
        <location evidence="10">Membrane</location>
        <topology evidence="10">Single-pass type I membrane protein</topology>
    </subcellularLocation>
</comment>
<comment type="alternative products">
    <event type="alternative splicing"/>
    <isoform>
        <id>Q6UX71-1</id>
        <name>1</name>
        <sequence type="displayed"/>
    </isoform>
    <isoform>
        <id>Q6UX71-2</id>
        <name>2</name>
        <sequence type="described" ref="VSP_018378"/>
    </isoform>
    <isoform>
        <id>Q6UX71-3</id>
        <name>3</name>
        <sequence type="described" ref="VSP_018377"/>
    </isoform>
</comment>
<comment type="tissue specificity">
    <text evidence="3">Expressed in the endothelial cells of the stroma but not in the endothelial cells of normal colonic tissue.</text>
</comment>
<comment type="similarity">
    <text evidence="10">Belongs to the plexin family.</text>
</comment>
<protein>
    <recommendedName>
        <fullName>Plexin domain-containing protein 2</fullName>
    </recommendedName>
    <alternativeName>
        <fullName>Tumor endothelial marker 7-related protein</fullName>
    </alternativeName>
</protein>
<evidence type="ECO:0000255" key="1"/>
<evidence type="ECO:0000256" key="2">
    <source>
        <dbReference type="SAM" id="MobiDB-lite"/>
    </source>
</evidence>
<evidence type="ECO:0000269" key="3">
    <source>
    </source>
</evidence>
<evidence type="ECO:0000269" key="4">
    <source>
    </source>
</evidence>
<evidence type="ECO:0000269" key="5">
    <source>
    </source>
</evidence>
<evidence type="ECO:0000269" key="6">
    <source>
    </source>
</evidence>
<evidence type="ECO:0000269" key="7">
    <source>
    </source>
</evidence>
<evidence type="ECO:0000303" key="8">
    <source>
    </source>
</evidence>
<evidence type="ECO:0000303" key="9">
    <source>
    </source>
</evidence>
<evidence type="ECO:0000305" key="10"/>
<evidence type="ECO:0007744" key="11">
    <source>
    </source>
</evidence>